<keyword id="KW-0030">Aminoacyl-tRNA synthetase</keyword>
<keyword id="KW-0067">ATP-binding</keyword>
<keyword id="KW-0963">Cytoplasm</keyword>
<keyword id="KW-0436">Ligase</keyword>
<keyword id="KW-0479">Metal-binding</keyword>
<keyword id="KW-0547">Nucleotide-binding</keyword>
<keyword id="KW-0648">Protein biosynthesis</keyword>
<keyword id="KW-1185">Reference proteome</keyword>
<keyword id="KW-0862">Zinc</keyword>
<sequence>MLKIFNSYTRLQEQLEVDKKKTINMYVCGITAYDFCHIGHGRTFIFFDVVVRYLRSLGYALKYVRNITDIDDKIIAASLKNNESYISLSNRMISNMKDDFSALNILPPDSEPRVTENISDIIKFISILLNKKHAYVACNGDIMFSVSSYLNYGALSNQFSKILNKEINISHYSTKKNIADFALWKTSKSSIFVGWNSPWGNGRPGWHIECSSMCRSAFKNKIDIHGGGVDLLFPHHENELAQSVCIDSNFSIKHWMHTGLVIINNEKMSKSLNNTLLLRDLLTQYDSEIIRFFLLSTHYRHPLYFCYKNLSNSSKLLKKLYLSLRGVDFDIKGLDIVDNFKTDFYKAMNSDFNTPLALSILLRLSKEINKFKLIDSNKASQLASKLRQLGSILGILLKDPEYFLQNNFNCNNSIIGKINSLIYERDKARRVKDWVRADRIRKELLELGIVLEDTSFNTFWRSLQ</sequence>
<name>SYC_BUCBP</name>
<dbReference type="EC" id="6.1.1.16" evidence="1"/>
<dbReference type="EMBL" id="AE016826">
    <property type="protein sequence ID" value="AAO27140.1"/>
    <property type="status" value="ALT_INIT"/>
    <property type="molecule type" value="Genomic_DNA"/>
</dbReference>
<dbReference type="RefSeq" id="WP_044010656.1">
    <property type="nucleotide sequence ID" value="NC_004545.1"/>
</dbReference>
<dbReference type="SMR" id="P59421"/>
<dbReference type="STRING" id="224915.bbp_431"/>
<dbReference type="KEGG" id="bab:bbp_431"/>
<dbReference type="eggNOG" id="COG0215">
    <property type="taxonomic scope" value="Bacteria"/>
</dbReference>
<dbReference type="HOGENOM" id="CLU_013528_0_1_6"/>
<dbReference type="OrthoDB" id="9815130at2"/>
<dbReference type="Proteomes" id="UP000000601">
    <property type="component" value="Chromosome"/>
</dbReference>
<dbReference type="GO" id="GO:0005829">
    <property type="term" value="C:cytosol"/>
    <property type="evidence" value="ECO:0007669"/>
    <property type="project" value="TreeGrafter"/>
</dbReference>
<dbReference type="GO" id="GO:0005524">
    <property type="term" value="F:ATP binding"/>
    <property type="evidence" value="ECO:0007669"/>
    <property type="project" value="UniProtKB-UniRule"/>
</dbReference>
<dbReference type="GO" id="GO:0004817">
    <property type="term" value="F:cysteine-tRNA ligase activity"/>
    <property type="evidence" value="ECO:0007669"/>
    <property type="project" value="UniProtKB-UniRule"/>
</dbReference>
<dbReference type="GO" id="GO:0008270">
    <property type="term" value="F:zinc ion binding"/>
    <property type="evidence" value="ECO:0007669"/>
    <property type="project" value="UniProtKB-UniRule"/>
</dbReference>
<dbReference type="GO" id="GO:0006423">
    <property type="term" value="P:cysteinyl-tRNA aminoacylation"/>
    <property type="evidence" value="ECO:0007669"/>
    <property type="project" value="UniProtKB-UniRule"/>
</dbReference>
<dbReference type="CDD" id="cd07963">
    <property type="entry name" value="Anticodon_Ia_Cys"/>
    <property type="match status" value="1"/>
</dbReference>
<dbReference type="CDD" id="cd00672">
    <property type="entry name" value="CysRS_core"/>
    <property type="match status" value="1"/>
</dbReference>
<dbReference type="Gene3D" id="1.20.120.1910">
    <property type="entry name" value="Cysteine-tRNA ligase, C-terminal anti-codon recognition domain"/>
    <property type="match status" value="1"/>
</dbReference>
<dbReference type="Gene3D" id="3.40.50.620">
    <property type="entry name" value="HUPs"/>
    <property type="match status" value="1"/>
</dbReference>
<dbReference type="HAMAP" id="MF_00041">
    <property type="entry name" value="Cys_tRNA_synth"/>
    <property type="match status" value="1"/>
</dbReference>
<dbReference type="InterPro" id="IPR015803">
    <property type="entry name" value="Cys-tRNA-ligase"/>
</dbReference>
<dbReference type="InterPro" id="IPR015273">
    <property type="entry name" value="Cys-tRNA-synt_Ia_DALR"/>
</dbReference>
<dbReference type="InterPro" id="IPR024909">
    <property type="entry name" value="Cys-tRNA/MSH_ligase"/>
</dbReference>
<dbReference type="InterPro" id="IPR056411">
    <property type="entry name" value="CysS_C"/>
</dbReference>
<dbReference type="InterPro" id="IPR014729">
    <property type="entry name" value="Rossmann-like_a/b/a_fold"/>
</dbReference>
<dbReference type="InterPro" id="IPR032678">
    <property type="entry name" value="tRNA-synt_1_cat_dom"/>
</dbReference>
<dbReference type="InterPro" id="IPR009080">
    <property type="entry name" value="tRNAsynth_Ia_anticodon-bd"/>
</dbReference>
<dbReference type="NCBIfam" id="TIGR00435">
    <property type="entry name" value="cysS"/>
    <property type="match status" value="1"/>
</dbReference>
<dbReference type="PANTHER" id="PTHR10890:SF3">
    <property type="entry name" value="CYSTEINE--TRNA LIGASE, CYTOPLASMIC"/>
    <property type="match status" value="1"/>
</dbReference>
<dbReference type="PANTHER" id="PTHR10890">
    <property type="entry name" value="CYSTEINYL-TRNA SYNTHETASE"/>
    <property type="match status" value="1"/>
</dbReference>
<dbReference type="Pfam" id="PF23493">
    <property type="entry name" value="CysS_C"/>
    <property type="match status" value="1"/>
</dbReference>
<dbReference type="Pfam" id="PF09190">
    <property type="entry name" value="DALR_2"/>
    <property type="match status" value="1"/>
</dbReference>
<dbReference type="Pfam" id="PF01406">
    <property type="entry name" value="tRNA-synt_1e"/>
    <property type="match status" value="1"/>
</dbReference>
<dbReference type="PRINTS" id="PR00983">
    <property type="entry name" value="TRNASYNTHCYS"/>
</dbReference>
<dbReference type="SMART" id="SM00840">
    <property type="entry name" value="DALR_2"/>
    <property type="match status" value="1"/>
</dbReference>
<dbReference type="SUPFAM" id="SSF47323">
    <property type="entry name" value="Anticodon-binding domain of a subclass of class I aminoacyl-tRNA synthetases"/>
    <property type="match status" value="1"/>
</dbReference>
<dbReference type="SUPFAM" id="SSF52374">
    <property type="entry name" value="Nucleotidylyl transferase"/>
    <property type="match status" value="1"/>
</dbReference>
<feature type="chain" id="PRO_0000159368" description="Cysteine--tRNA ligase">
    <location>
        <begin position="1"/>
        <end position="464"/>
    </location>
</feature>
<feature type="short sequence motif" description="'HIGH' region">
    <location>
        <begin position="30"/>
        <end position="40"/>
    </location>
</feature>
<feature type="short sequence motif" description="'KMSKS' region">
    <location>
        <begin position="267"/>
        <end position="271"/>
    </location>
</feature>
<feature type="binding site" evidence="1">
    <location>
        <position position="28"/>
    </location>
    <ligand>
        <name>Zn(2+)</name>
        <dbReference type="ChEBI" id="CHEBI:29105"/>
    </ligand>
</feature>
<feature type="binding site" evidence="1">
    <location>
        <position position="210"/>
    </location>
    <ligand>
        <name>Zn(2+)</name>
        <dbReference type="ChEBI" id="CHEBI:29105"/>
    </ligand>
</feature>
<feature type="binding site" evidence="1">
    <location>
        <position position="235"/>
    </location>
    <ligand>
        <name>Zn(2+)</name>
        <dbReference type="ChEBI" id="CHEBI:29105"/>
    </ligand>
</feature>
<feature type="binding site" evidence="1">
    <location>
        <position position="239"/>
    </location>
    <ligand>
        <name>Zn(2+)</name>
        <dbReference type="ChEBI" id="CHEBI:29105"/>
    </ligand>
</feature>
<feature type="binding site" evidence="1">
    <location>
        <position position="270"/>
    </location>
    <ligand>
        <name>ATP</name>
        <dbReference type="ChEBI" id="CHEBI:30616"/>
    </ligand>
</feature>
<organism>
    <name type="scientific">Buchnera aphidicola subsp. Baizongia pistaciae (strain Bp)</name>
    <dbReference type="NCBI Taxonomy" id="224915"/>
    <lineage>
        <taxon>Bacteria</taxon>
        <taxon>Pseudomonadati</taxon>
        <taxon>Pseudomonadota</taxon>
        <taxon>Gammaproteobacteria</taxon>
        <taxon>Enterobacterales</taxon>
        <taxon>Erwiniaceae</taxon>
        <taxon>Buchnera</taxon>
    </lineage>
</organism>
<accession>P59421</accession>
<protein>
    <recommendedName>
        <fullName evidence="1">Cysteine--tRNA ligase</fullName>
        <ecNumber evidence="1">6.1.1.16</ecNumber>
    </recommendedName>
    <alternativeName>
        <fullName evidence="1">Cysteinyl-tRNA synthetase</fullName>
        <shortName evidence="1">CysRS</shortName>
    </alternativeName>
</protein>
<evidence type="ECO:0000255" key="1">
    <source>
        <dbReference type="HAMAP-Rule" id="MF_00041"/>
    </source>
</evidence>
<evidence type="ECO:0000305" key="2"/>
<reference key="1">
    <citation type="journal article" date="2003" name="Proc. Natl. Acad. Sci. U.S.A.">
        <title>Reductive genome evolution in Buchnera aphidicola.</title>
        <authorList>
            <person name="van Ham R.C.H.J."/>
            <person name="Kamerbeek J."/>
            <person name="Palacios C."/>
            <person name="Rausell C."/>
            <person name="Abascal F."/>
            <person name="Bastolla U."/>
            <person name="Fernandez J.M."/>
            <person name="Jimenez L."/>
            <person name="Postigo M."/>
            <person name="Silva F.J."/>
            <person name="Tamames J."/>
            <person name="Viguera E."/>
            <person name="Latorre A."/>
            <person name="Valencia A."/>
            <person name="Moran F."/>
            <person name="Moya A."/>
        </authorList>
    </citation>
    <scope>NUCLEOTIDE SEQUENCE [LARGE SCALE GENOMIC DNA]</scope>
    <source>
        <strain>Bp</strain>
    </source>
</reference>
<comment type="catalytic activity">
    <reaction evidence="1">
        <text>tRNA(Cys) + L-cysteine + ATP = L-cysteinyl-tRNA(Cys) + AMP + diphosphate</text>
        <dbReference type="Rhea" id="RHEA:17773"/>
        <dbReference type="Rhea" id="RHEA-COMP:9661"/>
        <dbReference type="Rhea" id="RHEA-COMP:9679"/>
        <dbReference type="ChEBI" id="CHEBI:30616"/>
        <dbReference type="ChEBI" id="CHEBI:33019"/>
        <dbReference type="ChEBI" id="CHEBI:35235"/>
        <dbReference type="ChEBI" id="CHEBI:78442"/>
        <dbReference type="ChEBI" id="CHEBI:78517"/>
        <dbReference type="ChEBI" id="CHEBI:456215"/>
        <dbReference type="EC" id="6.1.1.16"/>
    </reaction>
</comment>
<comment type="cofactor">
    <cofactor evidence="1">
        <name>Zn(2+)</name>
        <dbReference type="ChEBI" id="CHEBI:29105"/>
    </cofactor>
    <text evidence="1">Binds 1 zinc ion per subunit.</text>
</comment>
<comment type="subunit">
    <text evidence="1">Monomer.</text>
</comment>
<comment type="subcellular location">
    <subcellularLocation>
        <location evidence="1">Cytoplasm</location>
    </subcellularLocation>
</comment>
<comment type="similarity">
    <text evidence="1">Belongs to the class-I aminoacyl-tRNA synthetase family.</text>
</comment>
<comment type="sequence caution" evidence="2">
    <conflict type="erroneous initiation">
        <sequence resource="EMBL-CDS" id="AAO27140"/>
    </conflict>
</comment>
<gene>
    <name evidence="1" type="primary">cysS</name>
    <name type="ordered locus">bbp_431</name>
</gene>
<proteinExistence type="inferred from homology"/>